<accession>Q07TR7</accession>
<sequence length="199" mass="20589">MAKVLVLYYSAYGHIETMAQAVAEGARAAGATVDIKRVPELVPAEVAKASHYKLDQAAPVASIDDLANYDAIIVGTGTRFGRMASQMANFLDQAGGLWAKGALHGKVGGAFTSTATQHGGQETTLFSIITNLLHFGMVVVGLNYGFAGQMTLDEVTGGSPYGATTITGGDGSRQPSANELAGARYQGQVIAETAIKLHG</sequence>
<evidence type="ECO:0000255" key="1">
    <source>
        <dbReference type="HAMAP-Rule" id="MF_01017"/>
    </source>
</evidence>
<name>NQOR_RHOP5</name>
<dbReference type="EC" id="1.6.5.2" evidence="1"/>
<dbReference type="EMBL" id="CP000463">
    <property type="protein sequence ID" value="ABJ04667.1"/>
    <property type="molecule type" value="Genomic_DNA"/>
</dbReference>
<dbReference type="SMR" id="Q07TR7"/>
<dbReference type="STRING" id="316055.RPE_0710"/>
<dbReference type="KEGG" id="rpe:RPE_0710"/>
<dbReference type="eggNOG" id="COG0655">
    <property type="taxonomic scope" value="Bacteria"/>
</dbReference>
<dbReference type="HOGENOM" id="CLU_051402_0_2_5"/>
<dbReference type="OrthoDB" id="9801479at2"/>
<dbReference type="GO" id="GO:0016020">
    <property type="term" value="C:membrane"/>
    <property type="evidence" value="ECO:0007669"/>
    <property type="project" value="TreeGrafter"/>
</dbReference>
<dbReference type="GO" id="GO:0050660">
    <property type="term" value="F:flavin adenine dinucleotide binding"/>
    <property type="evidence" value="ECO:0007669"/>
    <property type="project" value="UniProtKB-UniRule"/>
</dbReference>
<dbReference type="GO" id="GO:0010181">
    <property type="term" value="F:FMN binding"/>
    <property type="evidence" value="ECO:0007669"/>
    <property type="project" value="InterPro"/>
</dbReference>
<dbReference type="GO" id="GO:0051287">
    <property type="term" value="F:NAD binding"/>
    <property type="evidence" value="ECO:0007669"/>
    <property type="project" value="UniProtKB-UniRule"/>
</dbReference>
<dbReference type="GO" id="GO:0050136">
    <property type="term" value="F:NADH:ubiquinone reductase (non-electrogenic) activity"/>
    <property type="evidence" value="ECO:0007669"/>
    <property type="project" value="RHEA"/>
</dbReference>
<dbReference type="GO" id="GO:0050661">
    <property type="term" value="F:NADP binding"/>
    <property type="evidence" value="ECO:0007669"/>
    <property type="project" value="UniProtKB-UniRule"/>
</dbReference>
<dbReference type="GO" id="GO:0008753">
    <property type="term" value="F:NADPH dehydrogenase (quinone) activity"/>
    <property type="evidence" value="ECO:0007669"/>
    <property type="project" value="RHEA"/>
</dbReference>
<dbReference type="FunFam" id="3.40.50.360:FF:000001">
    <property type="entry name" value="NAD(P)H dehydrogenase (Quinone) FQR1-like"/>
    <property type="match status" value="1"/>
</dbReference>
<dbReference type="Gene3D" id="3.40.50.360">
    <property type="match status" value="1"/>
</dbReference>
<dbReference type="HAMAP" id="MF_01017">
    <property type="entry name" value="NQOR"/>
    <property type="match status" value="1"/>
</dbReference>
<dbReference type="InterPro" id="IPR008254">
    <property type="entry name" value="Flavodoxin/NO_synth"/>
</dbReference>
<dbReference type="InterPro" id="IPR029039">
    <property type="entry name" value="Flavoprotein-like_sf"/>
</dbReference>
<dbReference type="InterPro" id="IPR010089">
    <property type="entry name" value="Flavoprotein_WrbA-like"/>
</dbReference>
<dbReference type="InterPro" id="IPR005025">
    <property type="entry name" value="FMN_Rdtase-like_dom"/>
</dbReference>
<dbReference type="InterPro" id="IPR037513">
    <property type="entry name" value="NQO"/>
</dbReference>
<dbReference type="NCBIfam" id="TIGR01755">
    <property type="entry name" value="flav_wrbA"/>
    <property type="match status" value="1"/>
</dbReference>
<dbReference type="NCBIfam" id="NF002999">
    <property type="entry name" value="PRK03767.1"/>
    <property type="match status" value="1"/>
</dbReference>
<dbReference type="PANTHER" id="PTHR30546">
    <property type="entry name" value="FLAVODOXIN-RELATED PROTEIN WRBA-RELATED"/>
    <property type="match status" value="1"/>
</dbReference>
<dbReference type="PANTHER" id="PTHR30546:SF23">
    <property type="entry name" value="FLAVOPROTEIN-LIKE PROTEIN YCP4-RELATED"/>
    <property type="match status" value="1"/>
</dbReference>
<dbReference type="Pfam" id="PF03358">
    <property type="entry name" value="FMN_red"/>
    <property type="match status" value="1"/>
</dbReference>
<dbReference type="SUPFAM" id="SSF52218">
    <property type="entry name" value="Flavoproteins"/>
    <property type="match status" value="1"/>
</dbReference>
<dbReference type="PROSITE" id="PS50902">
    <property type="entry name" value="FLAVODOXIN_LIKE"/>
    <property type="match status" value="1"/>
</dbReference>
<reference key="1">
    <citation type="submission" date="2006-09" db="EMBL/GenBank/DDBJ databases">
        <title>Complete sequence of Rhodopseudomonas palustris BisA53.</title>
        <authorList>
            <consortium name="US DOE Joint Genome Institute"/>
            <person name="Copeland A."/>
            <person name="Lucas S."/>
            <person name="Lapidus A."/>
            <person name="Barry K."/>
            <person name="Detter J.C."/>
            <person name="Glavina del Rio T."/>
            <person name="Hammon N."/>
            <person name="Israni S."/>
            <person name="Dalin E."/>
            <person name="Tice H."/>
            <person name="Pitluck S."/>
            <person name="Chain P."/>
            <person name="Malfatti S."/>
            <person name="Shin M."/>
            <person name="Vergez L."/>
            <person name="Schmutz J."/>
            <person name="Larimer F."/>
            <person name="Land M."/>
            <person name="Hauser L."/>
            <person name="Pelletier D.A."/>
            <person name="Kyrpides N."/>
            <person name="Kim E."/>
            <person name="Harwood C.S."/>
            <person name="Oda Y."/>
            <person name="Richardson P."/>
        </authorList>
    </citation>
    <scope>NUCLEOTIDE SEQUENCE [LARGE SCALE GENOMIC DNA]</scope>
    <source>
        <strain>BisA53</strain>
    </source>
</reference>
<feature type="chain" id="PRO_0000291025" description="NAD(P)H dehydrogenase (quinone)">
    <location>
        <begin position="1"/>
        <end position="199"/>
    </location>
</feature>
<feature type="domain" description="Flavodoxin-like" evidence="1">
    <location>
        <begin position="4"/>
        <end position="190"/>
    </location>
</feature>
<feature type="binding site" evidence="1">
    <location>
        <begin position="10"/>
        <end position="15"/>
    </location>
    <ligand>
        <name>FMN</name>
        <dbReference type="ChEBI" id="CHEBI:58210"/>
    </ligand>
</feature>
<feature type="binding site" evidence="1">
    <location>
        <position position="12"/>
    </location>
    <ligand>
        <name>NAD(+)</name>
        <dbReference type="ChEBI" id="CHEBI:57540"/>
    </ligand>
</feature>
<feature type="binding site" evidence="1">
    <location>
        <begin position="78"/>
        <end position="80"/>
    </location>
    <ligand>
        <name>FMN</name>
        <dbReference type="ChEBI" id="CHEBI:58210"/>
    </ligand>
</feature>
<feature type="binding site" evidence="1">
    <location>
        <position position="98"/>
    </location>
    <ligand>
        <name>substrate</name>
    </ligand>
</feature>
<feature type="binding site" evidence="1">
    <location>
        <begin position="113"/>
        <end position="119"/>
    </location>
    <ligand>
        <name>FMN</name>
        <dbReference type="ChEBI" id="CHEBI:58210"/>
    </ligand>
</feature>
<feature type="binding site" evidence="1">
    <location>
        <position position="134"/>
    </location>
    <ligand>
        <name>FMN</name>
        <dbReference type="ChEBI" id="CHEBI:58210"/>
    </ligand>
</feature>
<gene>
    <name type="ordered locus">RPE_0710</name>
</gene>
<proteinExistence type="inferred from homology"/>
<organism>
    <name type="scientific">Rhodopseudomonas palustris (strain BisA53)</name>
    <dbReference type="NCBI Taxonomy" id="316055"/>
    <lineage>
        <taxon>Bacteria</taxon>
        <taxon>Pseudomonadati</taxon>
        <taxon>Pseudomonadota</taxon>
        <taxon>Alphaproteobacteria</taxon>
        <taxon>Hyphomicrobiales</taxon>
        <taxon>Nitrobacteraceae</taxon>
        <taxon>Rhodopseudomonas</taxon>
    </lineage>
</organism>
<keyword id="KW-0285">Flavoprotein</keyword>
<keyword id="KW-0288">FMN</keyword>
<keyword id="KW-0520">NAD</keyword>
<keyword id="KW-0521">NADP</keyword>
<keyword id="KW-0547">Nucleotide-binding</keyword>
<keyword id="KW-0560">Oxidoreductase</keyword>
<comment type="catalytic activity">
    <reaction evidence="1">
        <text>a quinone + NADH + H(+) = a quinol + NAD(+)</text>
        <dbReference type="Rhea" id="RHEA:46160"/>
        <dbReference type="ChEBI" id="CHEBI:15378"/>
        <dbReference type="ChEBI" id="CHEBI:24646"/>
        <dbReference type="ChEBI" id="CHEBI:57540"/>
        <dbReference type="ChEBI" id="CHEBI:57945"/>
        <dbReference type="ChEBI" id="CHEBI:132124"/>
        <dbReference type="EC" id="1.6.5.2"/>
    </reaction>
</comment>
<comment type="catalytic activity">
    <reaction evidence="1">
        <text>a quinone + NADPH + H(+) = a quinol + NADP(+)</text>
        <dbReference type="Rhea" id="RHEA:46164"/>
        <dbReference type="ChEBI" id="CHEBI:15378"/>
        <dbReference type="ChEBI" id="CHEBI:24646"/>
        <dbReference type="ChEBI" id="CHEBI:57783"/>
        <dbReference type="ChEBI" id="CHEBI:58349"/>
        <dbReference type="ChEBI" id="CHEBI:132124"/>
        <dbReference type="EC" id="1.6.5.2"/>
    </reaction>
</comment>
<comment type="cofactor">
    <cofactor evidence="1">
        <name>FMN</name>
        <dbReference type="ChEBI" id="CHEBI:58210"/>
    </cofactor>
    <text evidence="1">Binds 1 FMN per monomer.</text>
</comment>
<comment type="similarity">
    <text evidence="1">Belongs to the WrbA family.</text>
</comment>
<protein>
    <recommendedName>
        <fullName evidence="1">NAD(P)H dehydrogenase (quinone)</fullName>
        <ecNumber evidence="1">1.6.5.2</ecNumber>
    </recommendedName>
    <alternativeName>
        <fullName>Flavoprotein WrbA</fullName>
    </alternativeName>
    <alternativeName>
        <fullName evidence="1">NAD(P)H:quinone oxidoreductase</fullName>
        <shortName evidence="1">NQO</shortName>
    </alternativeName>
</protein>